<reference key="1">
    <citation type="journal article" date="2015" name="Toxins">
        <title>Molecular cloning and functional analysis of gene clusters for the biosynthesis of indole-diterpenes in Penicillium crustosum and P. janthinellum.</title>
        <authorList>
            <person name="Nicholson M.J."/>
            <person name="Eaton C.J."/>
            <person name="Starkel C."/>
            <person name="Tapper B.A."/>
            <person name="Cox M.P."/>
            <person name="Scott B."/>
        </authorList>
    </citation>
    <scope>NUCLEOTIDE SEQUENCE [GENOMIC DNA]</scope>
    <scope>IDENTIFICATION</scope>
    <scope>FUNCTION</scope>
    <scope>PATHWAY</scope>
    <source>
        <strain>PN2408</strain>
    </source>
</reference>
<organism>
    <name type="scientific">Penicillium janthinellum</name>
    <name type="common">Penicillium vitale</name>
    <dbReference type="NCBI Taxonomy" id="5079"/>
    <lineage>
        <taxon>Eukaryota</taxon>
        <taxon>Fungi</taxon>
        <taxon>Dikarya</taxon>
        <taxon>Ascomycota</taxon>
        <taxon>Pezizomycotina</taxon>
        <taxon>Eurotiomycetes</taxon>
        <taxon>Eurotiomycetidae</taxon>
        <taxon>Eurotiales</taxon>
        <taxon>Aspergillaceae</taxon>
        <taxon>Penicillium</taxon>
    </lineage>
</organism>
<name>JANG_PENJA</name>
<sequence>MLYFLAETIFGFICQYVPIGFWNGYSPAPTDRYRRLDLKSSQGFRAEPNLAPLPTTKPRRERYYGPNQIIRAPLDYLLSIPGKDIRGKLINAFNEWLQLPDDKLAIVKEVINLLHTASLLIDDIQDGSRLRRGRPVAHEVFGVAQTINAANYAYFLQQERLSEIGDPRAFHIFTNALLDLHRGQGMDLYWREAVVCPTEEEYIRMVIYKTGGLFRLALELMQVQSNSTTDFSELVELLGIIFQIRDDYMNLQSGLYAEKKGSMEDLTEGKFSYPVIHSIHAAPENSMLVDILKQRTEDNVVKVRAVHYMESTGSFQYCRENLARLTKQARHHVKELEVSLGPNRGIHAILDLLHVQQPNEKPLV</sequence>
<feature type="chain" id="PRO_0000446551" description="Geranylgeranyl pyrophosphate synthase janG">
    <location>
        <begin position="1"/>
        <end position="364"/>
    </location>
</feature>
<feature type="binding site" evidence="1">
    <location>
        <position position="83"/>
    </location>
    <ligand>
        <name>isopentenyl diphosphate</name>
        <dbReference type="ChEBI" id="CHEBI:128769"/>
    </ligand>
</feature>
<feature type="binding site" evidence="1">
    <location>
        <position position="86"/>
    </location>
    <ligand>
        <name>isopentenyl diphosphate</name>
        <dbReference type="ChEBI" id="CHEBI:128769"/>
    </ligand>
</feature>
<feature type="binding site" evidence="1">
    <location>
        <position position="115"/>
    </location>
    <ligand>
        <name>isopentenyl diphosphate</name>
        <dbReference type="ChEBI" id="CHEBI:128769"/>
    </ligand>
</feature>
<feature type="binding site" evidence="1">
    <location>
        <position position="122"/>
    </location>
    <ligand>
        <name>Mg(2+)</name>
        <dbReference type="ChEBI" id="CHEBI:18420"/>
        <label>1</label>
    </ligand>
</feature>
<feature type="binding site" evidence="1">
    <location>
        <position position="122"/>
    </location>
    <ligand>
        <name>Mg(2+)</name>
        <dbReference type="ChEBI" id="CHEBI:18420"/>
        <label>2</label>
    </ligand>
</feature>
<feature type="binding site" evidence="1">
    <location>
        <position position="126"/>
    </location>
    <ligand>
        <name>Mg(2+)</name>
        <dbReference type="ChEBI" id="CHEBI:18420"/>
        <label>1</label>
    </ligand>
</feature>
<feature type="binding site" evidence="1">
    <location>
        <position position="126"/>
    </location>
    <ligand>
        <name>Mg(2+)</name>
        <dbReference type="ChEBI" id="CHEBI:18420"/>
        <label>2</label>
    </ligand>
</feature>
<feature type="binding site" evidence="1">
    <location>
        <position position="131"/>
    </location>
    <ligand>
        <name>dimethylallyl diphosphate</name>
        <dbReference type="ChEBI" id="CHEBI:57623"/>
    </ligand>
</feature>
<feature type="binding site" evidence="1">
    <location>
        <position position="132"/>
    </location>
    <ligand>
        <name>isopentenyl diphosphate</name>
        <dbReference type="ChEBI" id="CHEBI:128769"/>
    </ligand>
</feature>
<feature type="binding site" evidence="1">
    <location>
        <position position="209"/>
    </location>
    <ligand>
        <name>dimethylallyl diphosphate</name>
        <dbReference type="ChEBI" id="CHEBI:57623"/>
    </ligand>
</feature>
<feature type="binding site" evidence="1">
    <location>
        <position position="210"/>
    </location>
    <ligand>
        <name>dimethylallyl diphosphate</name>
        <dbReference type="ChEBI" id="CHEBI:57623"/>
    </ligand>
</feature>
<feature type="binding site" evidence="1">
    <location>
        <position position="243"/>
    </location>
    <ligand>
        <name>dimethylallyl diphosphate</name>
        <dbReference type="ChEBI" id="CHEBI:57623"/>
    </ligand>
</feature>
<feature type="binding site" evidence="1">
    <location>
        <position position="246"/>
    </location>
    <ligand>
        <name>Mg(2+)</name>
        <dbReference type="ChEBI" id="CHEBI:18420"/>
        <label>3</label>
    </ligand>
</feature>
<feature type="binding site" evidence="1">
    <location>
        <position position="250"/>
    </location>
    <ligand>
        <name>dimethylallyl diphosphate</name>
        <dbReference type="ChEBI" id="CHEBI:57623"/>
    </ligand>
</feature>
<feature type="binding site" evidence="1">
    <location>
        <position position="260"/>
    </location>
    <ligand>
        <name>dimethylallyl diphosphate</name>
        <dbReference type="ChEBI" id="CHEBI:57623"/>
    </ligand>
</feature>
<feature type="binding site" evidence="1">
    <location>
        <position position="270"/>
    </location>
    <ligand>
        <name>dimethylallyl diphosphate</name>
        <dbReference type="ChEBI" id="CHEBI:57623"/>
    </ligand>
</feature>
<feature type="site" description="Important for determining product chain length" evidence="1">
    <location>
        <position position="154"/>
    </location>
</feature>
<gene>
    <name evidence="3" type="primary">janG</name>
</gene>
<evidence type="ECO:0000250" key="1">
    <source>
        <dbReference type="UniProtKB" id="Q12051"/>
    </source>
</evidence>
<evidence type="ECO:0000269" key="2">
    <source>
    </source>
</evidence>
<evidence type="ECO:0000303" key="3">
    <source>
    </source>
</evidence>
<evidence type="ECO:0000305" key="4"/>
<evidence type="ECO:0000305" key="5">
    <source>
    </source>
</evidence>
<protein>
    <recommendedName>
        <fullName evidence="3">Geranylgeranyl pyrophosphate synthase janG</fullName>
        <shortName evidence="4">GGPP synthase</shortName>
        <shortName evidence="4">GGPPSase</shortName>
        <ecNumber evidence="4">2.5.1.-</ecNumber>
    </recommendedName>
    <alternativeName>
        <fullName evidence="1">(2E,6E)-farnesyl diphosphate synthase</fullName>
    </alternativeName>
    <alternativeName>
        <fullName evidence="1">Dimethylallyltranstransferase</fullName>
        <ecNumber evidence="1">2.5.1.1</ecNumber>
    </alternativeName>
    <alternativeName>
        <fullName evidence="1">Farnesyl diphosphate synthase</fullName>
    </alternativeName>
    <alternativeName>
        <fullName evidence="1">Farnesyltranstransferase</fullName>
        <ecNumber evidence="1">2.5.1.29</ecNumber>
    </alternativeName>
    <alternativeName>
        <fullName evidence="1">Geranylgeranyl diphosphate synthase</fullName>
    </alternativeName>
    <alternativeName>
        <fullName evidence="1">Geranyltranstransferase</fullName>
        <ecNumber evidence="1">2.5.1.10</ecNumber>
    </alternativeName>
    <alternativeName>
        <fullName evidence="3">Janthitremanes biosynthesis cluster protein G</fullName>
    </alternativeName>
</protein>
<keyword id="KW-0414">Isoprene biosynthesis</keyword>
<keyword id="KW-0460">Magnesium</keyword>
<keyword id="KW-0479">Metal-binding</keyword>
<keyword id="KW-0808">Transferase</keyword>
<proteinExistence type="inferred from homology"/>
<dbReference type="EC" id="2.5.1.-" evidence="4"/>
<dbReference type="EC" id="2.5.1.1" evidence="1"/>
<dbReference type="EC" id="2.5.1.29" evidence="1"/>
<dbReference type="EC" id="2.5.1.10" evidence="1"/>
<dbReference type="EMBL" id="KF280651">
    <property type="protein sequence ID" value="AGZ20472.2"/>
    <property type="molecule type" value="Genomic_DNA"/>
</dbReference>
<dbReference type="SMR" id="A0A0E3D8M9"/>
<dbReference type="GO" id="GO:0004337">
    <property type="term" value="F:(2E,6E)-farnesyl diphosphate synthase activity"/>
    <property type="evidence" value="ECO:0007669"/>
    <property type="project" value="UniProtKB-EC"/>
</dbReference>
<dbReference type="GO" id="GO:0004161">
    <property type="term" value="F:dimethylallyltranstransferase activity"/>
    <property type="evidence" value="ECO:0007669"/>
    <property type="project" value="UniProtKB-EC"/>
</dbReference>
<dbReference type="GO" id="GO:0004311">
    <property type="term" value="F:geranylgeranyl diphosphate synthase activity"/>
    <property type="evidence" value="ECO:0007669"/>
    <property type="project" value="UniProtKB-EC"/>
</dbReference>
<dbReference type="GO" id="GO:0046872">
    <property type="term" value="F:metal ion binding"/>
    <property type="evidence" value="ECO:0007669"/>
    <property type="project" value="UniProtKB-KW"/>
</dbReference>
<dbReference type="GO" id="GO:0046165">
    <property type="term" value="P:alcohol biosynthetic process"/>
    <property type="evidence" value="ECO:0007669"/>
    <property type="project" value="UniProtKB-ARBA"/>
</dbReference>
<dbReference type="GO" id="GO:0008299">
    <property type="term" value="P:isoprenoid biosynthetic process"/>
    <property type="evidence" value="ECO:0007669"/>
    <property type="project" value="UniProtKB-KW"/>
</dbReference>
<dbReference type="GO" id="GO:0043386">
    <property type="term" value="P:mycotoxin biosynthetic process"/>
    <property type="evidence" value="ECO:0007669"/>
    <property type="project" value="UniProtKB-ARBA"/>
</dbReference>
<dbReference type="CDD" id="cd00685">
    <property type="entry name" value="Trans_IPPS_HT"/>
    <property type="match status" value="1"/>
</dbReference>
<dbReference type="Gene3D" id="1.10.600.10">
    <property type="entry name" value="Farnesyl Diphosphate Synthase"/>
    <property type="match status" value="1"/>
</dbReference>
<dbReference type="InterPro" id="IPR008949">
    <property type="entry name" value="Isoprenoid_synthase_dom_sf"/>
</dbReference>
<dbReference type="InterPro" id="IPR000092">
    <property type="entry name" value="Polyprenyl_synt"/>
</dbReference>
<dbReference type="InterPro" id="IPR033749">
    <property type="entry name" value="Polyprenyl_synt_CS"/>
</dbReference>
<dbReference type="PANTHER" id="PTHR12001">
    <property type="entry name" value="GERANYLGERANYL PYROPHOSPHATE SYNTHASE"/>
    <property type="match status" value="1"/>
</dbReference>
<dbReference type="PANTHER" id="PTHR12001:SF70">
    <property type="entry name" value="PYROPHOSPHATE SYNTHETASE ATMG, PUTATIVE (AFU_ORTHOLOGUE AFUA_8G02400)-RELATED"/>
    <property type="match status" value="1"/>
</dbReference>
<dbReference type="Pfam" id="PF00348">
    <property type="entry name" value="polyprenyl_synt"/>
    <property type="match status" value="1"/>
</dbReference>
<dbReference type="SFLD" id="SFLDS00005">
    <property type="entry name" value="Isoprenoid_Synthase_Type_I"/>
    <property type="match status" value="1"/>
</dbReference>
<dbReference type="SFLD" id="SFLDG01017">
    <property type="entry name" value="Polyprenyl_Transferase_Like"/>
    <property type="match status" value="1"/>
</dbReference>
<dbReference type="SUPFAM" id="SSF48576">
    <property type="entry name" value="Terpenoid synthases"/>
    <property type="match status" value="1"/>
</dbReference>
<dbReference type="PROSITE" id="PS00723">
    <property type="entry name" value="POLYPRENYL_SYNTHASE_1"/>
    <property type="match status" value="1"/>
</dbReference>
<dbReference type="PROSITE" id="PS00444">
    <property type="entry name" value="POLYPRENYL_SYNTHASE_2"/>
    <property type="match status" value="1"/>
</dbReference>
<accession>A0A0E3D8M9</accession>
<comment type="function">
    <text evidence="2 5">Geranylgeranyl pyrophosphate synthase; part of the gene cluster that mediates the biosynthesis of the indole diterpenes janthitremanes such as shearinine K or shearinine A (PubMed:26213965). The geranylgeranyl diphosphate (GGPP) synthase janG catalyzes the first step in janthitremane biosynthesis via conversion of farnesyl pyrophosphate and isopentyl pyrophosphate into geranylgeranyl pyrophosphate (GGPP) (PubMed:26213965). Condensation of indole-3-glycerol phosphate with GGPP by the prenyl transferase janC then forms 3-geranylgeranylindole (3-GGI) (PubMed:26213965). Epoxidation by the FAD-dependent monooxygenase janM leads to a epoxidized-GGI that is substrate of the terpene cyclase janB for cyclization to yield paspaline (PubMed:26213965). Paspaline is subsequently converted to 13-desoxypaspaline by the cytochrome P450 monooxygenase janP, via beta-PC-M6 in a series of alpha-face oxidations (Probable). The cytochrome P450 monooxygenase janQ is proposed to carry out sequential beta-face oxidation steps at C-7 and C-13 of 13-desoxypaspaline to form paspalicine and paspalinine respectively (Probable). The indole diterpene prenyltransferase janD may then convert paspalinine into shearinine K which is substrate of janO and/or additional enzymes for oxidation and cyclization to generate shearinine A (Probable).</text>
</comment>
<comment type="catalytic activity">
    <reaction evidence="1">
        <text>isopentenyl diphosphate + dimethylallyl diphosphate = (2E)-geranyl diphosphate + diphosphate</text>
        <dbReference type="Rhea" id="RHEA:22408"/>
        <dbReference type="ChEBI" id="CHEBI:33019"/>
        <dbReference type="ChEBI" id="CHEBI:57623"/>
        <dbReference type="ChEBI" id="CHEBI:58057"/>
        <dbReference type="ChEBI" id="CHEBI:128769"/>
        <dbReference type="EC" id="2.5.1.1"/>
    </reaction>
</comment>
<comment type="catalytic activity">
    <reaction evidence="1">
        <text>isopentenyl diphosphate + (2E)-geranyl diphosphate = (2E,6E)-farnesyl diphosphate + diphosphate</text>
        <dbReference type="Rhea" id="RHEA:19361"/>
        <dbReference type="ChEBI" id="CHEBI:33019"/>
        <dbReference type="ChEBI" id="CHEBI:58057"/>
        <dbReference type="ChEBI" id="CHEBI:128769"/>
        <dbReference type="ChEBI" id="CHEBI:175763"/>
        <dbReference type="EC" id="2.5.1.10"/>
    </reaction>
</comment>
<comment type="catalytic activity">
    <reaction evidence="1">
        <text>isopentenyl diphosphate + (2E,6E)-farnesyl diphosphate = (2E,6E,10E)-geranylgeranyl diphosphate + diphosphate</text>
        <dbReference type="Rhea" id="RHEA:17653"/>
        <dbReference type="ChEBI" id="CHEBI:33019"/>
        <dbReference type="ChEBI" id="CHEBI:58756"/>
        <dbReference type="ChEBI" id="CHEBI:128769"/>
        <dbReference type="ChEBI" id="CHEBI:175763"/>
        <dbReference type="EC" id="2.5.1.29"/>
    </reaction>
</comment>
<comment type="cofactor">
    <cofactor evidence="1">
        <name>Mg(2+)</name>
        <dbReference type="ChEBI" id="CHEBI:18420"/>
    </cofactor>
    <text evidence="1">Binds 3 Mg(2+) ions per subunit.</text>
</comment>
<comment type="pathway">
    <text evidence="2">Secondary metabolite biosynthesis.</text>
</comment>
<comment type="pathway">
    <text evidence="5">Secondary metabolite biosynthesis.</text>
</comment>
<comment type="similarity">
    <text evidence="4">Belongs to the FPP/GGPP synthase family.</text>
</comment>